<protein>
    <recommendedName>
        <fullName>Tropomyosin alpha-4 chain</fullName>
    </recommendedName>
    <alternativeName>
        <fullName>Tropomyosin-4</fullName>
    </alternativeName>
</protein>
<evidence type="ECO:0000250" key="1"/>
<evidence type="ECO:0000250" key="2">
    <source>
        <dbReference type="UniProtKB" id="P09495"/>
    </source>
</evidence>
<evidence type="ECO:0000250" key="3">
    <source>
        <dbReference type="UniProtKB" id="P67936"/>
    </source>
</evidence>
<evidence type="ECO:0000256" key="4">
    <source>
        <dbReference type="SAM" id="MobiDB-lite"/>
    </source>
</evidence>
<evidence type="ECO:0000269" key="5">
    <source>
    </source>
</evidence>
<evidence type="ECO:0000305" key="6"/>
<keyword id="KW-0007">Acetylation</keyword>
<keyword id="KW-0009">Actin-binding</keyword>
<keyword id="KW-0106">Calcium</keyword>
<keyword id="KW-0175">Coiled coil</keyword>
<keyword id="KW-0963">Cytoplasm</keyword>
<keyword id="KW-0206">Cytoskeleton</keyword>
<keyword id="KW-0479">Metal-binding</keyword>
<keyword id="KW-0514">Muscle protein</keyword>
<keyword id="KW-0597">Phosphoprotein</keyword>
<keyword id="KW-1185">Reference proteome</keyword>
<organism>
    <name type="scientific">Sus scrofa</name>
    <name type="common">Pig</name>
    <dbReference type="NCBI Taxonomy" id="9823"/>
    <lineage>
        <taxon>Eukaryota</taxon>
        <taxon>Metazoa</taxon>
        <taxon>Chordata</taxon>
        <taxon>Craniata</taxon>
        <taxon>Vertebrata</taxon>
        <taxon>Euteleostomi</taxon>
        <taxon>Mammalia</taxon>
        <taxon>Eutheria</taxon>
        <taxon>Laurasiatheria</taxon>
        <taxon>Artiodactyla</taxon>
        <taxon>Suina</taxon>
        <taxon>Suidae</taxon>
        <taxon>Sus</taxon>
    </lineage>
</organism>
<proteinExistence type="evidence at transcript level"/>
<reference key="1">
    <citation type="journal article" date="2003" name="Eur. J. Cell Biol.">
        <title>Tropomyosin 4 expression is enhanced in dedifferentiating smooth muscle cells in vitro and during atherogenesis.</title>
        <authorList>
            <person name="Abouhamed M."/>
            <person name="Reichenberg S."/>
            <person name="Robenek H."/>
            <person name="Plenz G."/>
        </authorList>
    </citation>
    <scope>NUCLEOTIDE SEQUENCE [MRNA]</scope>
    <scope>DEVELOPMENTAL STAGE</scope>
    <source>
        <tissue>Smooth muscle</tissue>
    </source>
</reference>
<comment type="function">
    <text evidence="2 3">Binds to actin filaments in muscle and non-muscle cells. Plays a central role, in association with the troponin complex, in the calcium dependent regulation of vertebrate striated muscle contraction. Smooth muscle contraction is regulated by interaction with caldesmon. In non-muscle cells is implicated in stabilizing cytoskeleton actin filaments. Binds calcium. Plays a role in platelet biogenesis.</text>
</comment>
<comment type="subunit">
    <text evidence="2">Homodimer. Heterodimer of an alpha (TPM1, TPM3 or TPM4) and a beta (TPM2) chain.</text>
</comment>
<comment type="subcellular location">
    <subcellularLocation>
        <location evidence="2">Cytoplasm</location>
        <location evidence="2">Cytoskeleton</location>
    </subcellularLocation>
    <text evidence="2">Associates with F-actin stress fibers.</text>
</comment>
<comment type="developmental stage">
    <text evidence="5">Expression is increased in smooth muscle cells during dedifferentiation from the contractile to the synthetic phenotype.</text>
</comment>
<comment type="domain">
    <text>The molecule is in a coiled coil structure that is formed by 2 polypeptide chains. The sequence exhibits a prominent seven-residues periodicity.</text>
</comment>
<comment type="similarity">
    <text evidence="6">Belongs to the tropomyosin family.</text>
</comment>
<dbReference type="EMBL" id="AF087679">
    <property type="protein sequence ID" value="AAC61744.1"/>
    <property type="molecule type" value="mRNA"/>
</dbReference>
<dbReference type="RefSeq" id="NP_999500.1">
    <property type="nucleotide sequence ID" value="NM_214335.1"/>
</dbReference>
<dbReference type="SMR" id="P67937"/>
<dbReference type="FunCoup" id="P67937">
    <property type="interactions" value="225"/>
</dbReference>
<dbReference type="STRING" id="9823.ENSSSCP00000040331"/>
<dbReference type="PaxDb" id="9823-ENSSSCP00000014722"/>
<dbReference type="PeptideAtlas" id="P67937"/>
<dbReference type="Ensembl" id="ENSSSCT00000015127.4">
    <property type="protein sequence ID" value="ENSSSCP00000014722.2"/>
    <property type="gene ID" value="ENSSSCG00000013849.5"/>
</dbReference>
<dbReference type="Ensembl" id="ENSSSCT00015073818.1">
    <property type="protein sequence ID" value="ENSSSCP00015029640.1"/>
    <property type="gene ID" value="ENSSSCG00015053903.1"/>
</dbReference>
<dbReference type="Ensembl" id="ENSSSCT00025012833.1">
    <property type="protein sequence ID" value="ENSSSCP00025005056.1"/>
    <property type="gene ID" value="ENSSSCG00025009586.1"/>
</dbReference>
<dbReference type="Ensembl" id="ENSSSCT00035052009.1">
    <property type="protein sequence ID" value="ENSSSCP00035020889.1"/>
    <property type="gene ID" value="ENSSSCG00035039121.1"/>
</dbReference>
<dbReference type="Ensembl" id="ENSSSCT00040097007.1">
    <property type="protein sequence ID" value="ENSSSCP00040043200.1"/>
    <property type="gene ID" value="ENSSSCG00040070474.1"/>
</dbReference>
<dbReference type="Ensembl" id="ENSSSCT00045053574.1">
    <property type="protein sequence ID" value="ENSSSCP00045037251.1"/>
    <property type="gene ID" value="ENSSSCG00045030931.1"/>
</dbReference>
<dbReference type="Ensembl" id="ENSSSCT00050099870.1">
    <property type="protein sequence ID" value="ENSSSCP00050043254.1"/>
    <property type="gene ID" value="ENSSSCG00050073083.1"/>
</dbReference>
<dbReference type="Ensembl" id="ENSSSCT00055049334.1">
    <property type="protein sequence ID" value="ENSSSCP00055039415.1"/>
    <property type="gene ID" value="ENSSSCG00055024068.1"/>
</dbReference>
<dbReference type="Ensembl" id="ENSSSCT00060034836.1">
    <property type="protein sequence ID" value="ENSSSCP00060014896.1"/>
    <property type="gene ID" value="ENSSSCG00060025616.1"/>
</dbReference>
<dbReference type="Ensembl" id="ENSSSCT00065001791.1">
    <property type="protein sequence ID" value="ENSSSCP00065000573.1"/>
    <property type="gene ID" value="ENSSSCG00065001341.1"/>
</dbReference>
<dbReference type="Ensembl" id="ENSSSCT00070041242.1">
    <property type="protein sequence ID" value="ENSSSCP00070034624.1"/>
    <property type="gene ID" value="ENSSSCG00070020680.1"/>
</dbReference>
<dbReference type="Ensembl" id="ENSSSCT00105010913">
    <property type="protein sequence ID" value="ENSSSCP00105008056"/>
    <property type="gene ID" value="ENSSSCG00105005312"/>
</dbReference>
<dbReference type="Ensembl" id="ENSSSCT00110044975">
    <property type="protein sequence ID" value="ENSSSCP00110031776"/>
    <property type="gene ID" value="ENSSSCG00110023196"/>
</dbReference>
<dbReference type="Ensembl" id="ENSSSCT00115013525">
    <property type="protein sequence ID" value="ENSSSCP00115012781"/>
    <property type="gene ID" value="ENSSSCG00115007734"/>
</dbReference>
<dbReference type="Ensembl" id="ENSSSCT00130061801">
    <property type="protein sequence ID" value="ENSSSCP00130044262"/>
    <property type="gene ID" value="ENSSSCG00130031653"/>
</dbReference>
<dbReference type="GeneID" id="397608"/>
<dbReference type="KEGG" id="ssc:397608"/>
<dbReference type="CTD" id="7171"/>
<dbReference type="VGNC" id="VGNC:94339">
    <property type="gene designation" value="TPM4"/>
</dbReference>
<dbReference type="eggNOG" id="KOG1003">
    <property type="taxonomic scope" value="Eukaryota"/>
</dbReference>
<dbReference type="GeneTree" id="ENSGT01030000234542"/>
<dbReference type="HOGENOM" id="CLU_055027_3_0_1"/>
<dbReference type="InParanoid" id="P67937"/>
<dbReference type="OMA" id="MDKREDY"/>
<dbReference type="OrthoDB" id="128924at2759"/>
<dbReference type="TreeFam" id="TF351519"/>
<dbReference type="Reactome" id="R-SSC-390522">
    <property type="pathway name" value="Striated Muscle Contraction"/>
</dbReference>
<dbReference type="Reactome" id="R-SSC-445355">
    <property type="pathway name" value="Smooth Muscle Contraction"/>
</dbReference>
<dbReference type="Reactome" id="R-SSC-9013424">
    <property type="pathway name" value="RHOV GTPase cycle"/>
</dbReference>
<dbReference type="Proteomes" id="UP000008227">
    <property type="component" value="Chromosome 2"/>
</dbReference>
<dbReference type="Proteomes" id="UP000314985">
    <property type="component" value="Chromosome 2"/>
</dbReference>
<dbReference type="Proteomes" id="UP000694570">
    <property type="component" value="Unplaced"/>
</dbReference>
<dbReference type="Proteomes" id="UP000694571">
    <property type="component" value="Unplaced"/>
</dbReference>
<dbReference type="Proteomes" id="UP000694720">
    <property type="component" value="Unplaced"/>
</dbReference>
<dbReference type="Proteomes" id="UP000694722">
    <property type="component" value="Unplaced"/>
</dbReference>
<dbReference type="Proteomes" id="UP000694723">
    <property type="component" value="Unplaced"/>
</dbReference>
<dbReference type="Proteomes" id="UP000694724">
    <property type="component" value="Unplaced"/>
</dbReference>
<dbReference type="Proteomes" id="UP000694725">
    <property type="component" value="Unplaced"/>
</dbReference>
<dbReference type="Proteomes" id="UP000694726">
    <property type="component" value="Unplaced"/>
</dbReference>
<dbReference type="Proteomes" id="UP000694727">
    <property type="component" value="Unplaced"/>
</dbReference>
<dbReference type="Proteomes" id="UP000694728">
    <property type="component" value="Unplaced"/>
</dbReference>
<dbReference type="Bgee" id="ENSSSCG00000013849">
    <property type="expression patterns" value="Expressed in lung and 43 other cell types or tissues"/>
</dbReference>
<dbReference type="ExpressionAtlas" id="P67937">
    <property type="expression patterns" value="baseline and differential"/>
</dbReference>
<dbReference type="GO" id="GO:0015629">
    <property type="term" value="C:actin cytoskeleton"/>
    <property type="evidence" value="ECO:0000250"/>
    <property type="project" value="UniProtKB"/>
</dbReference>
<dbReference type="GO" id="GO:0005884">
    <property type="term" value="C:actin filament"/>
    <property type="evidence" value="ECO:0000318"/>
    <property type="project" value="GO_Central"/>
</dbReference>
<dbReference type="GO" id="GO:0005737">
    <property type="term" value="C:cytoplasm"/>
    <property type="evidence" value="ECO:0007669"/>
    <property type="project" value="UniProtKB-KW"/>
</dbReference>
<dbReference type="GO" id="GO:0051015">
    <property type="term" value="F:actin filament binding"/>
    <property type="evidence" value="ECO:0000250"/>
    <property type="project" value="UniProtKB"/>
</dbReference>
<dbReference type="GO" id="GO:0042802">
    <property type="term" value="F:identical protein binding"/>
    <property type="evidence" value="ECO:0000250"/>
    <property type="project" value="UniProtKB"/>
</dbReference>
<dbReference type="GO" id="GO:0046872">
    <property type="term" value="F:metal ion binding"/>
    <property type="evidence" value="ECO:0007669"/>
    <property type="project" value="UniProtKB-KW"/>
</dbReference>
<dbReference type="GO" id="GO:0046982">
    <property type="term" value="F:protein heterodimerization activity"/>
    <property type="evidence" value="ECO:0000250"/>
    <property type="project" value="UniProtKB"/>
</dbReference>
<dbReference type="GO" id="GO:0042803">
    <property type="term" value="F:protein homodimerization activity"/>
    <property type="evidence" value="ECO:0000250"/>
    <property type="project" value="UniProtKB"/>
</dbReference>
<dbReference type="GO" id="GO:0007015">
    <property type="term" value="P:actin filament organization"/>
    <property type="evidence" value="ECO:0000318"/>
    <property type="project" value="GO_Central"/>
</dbReference>
<dbReference type="GO" id="GO:0006936">
    <property type="term" value="P:muscle contraction"/>
    <property type="evidence" value="ECO:0000318"/>
    <property type="project" value="GO_Central"/>
</dbReference>
<dbReference type="GO" id="GO:0030220">
    <property type="term" value="P:platelet formation"/>
    <property type="evidence" value="ECO:0000250"/>
    <property type="project" value="UniProtKB"/>
</dbReference>
<dbReference type="FunFam" id="1.20.5.170:FF:000001">
    <property type="entry name" value="Tropomyosin alpha-1 chain isoform 1"/>
    <property type="match status" value="1"/>
</dbReference>
<dbReference type="FunFam" id="1.20.5.340:FF:000001">
    <property type="entry name" value="Tropomyosin alpha-1 chain isoform 2"/>
    <property type="match status" value="1"/>
</dbReference>
<dbReference type="FunFam" id="1.20.5.370:FF:000004">
    <property type="entry name" value="tropomyosin alpha-1 chain isoform X1"/>
    <property type="match status" value="1"/>
</dbReference>
<dbReference type="Gene3D" id="1.20.5.170">
    <property type="match status" value="1"/>
</dbReference>
<dbReference type="Gene3D" id="1.20.5.370">
    <property type="match status" value="1"/>
</dbReference>
<dbReference type="InterPro" id="IPR000533">
    <property type="entry name" value="Tropomyosin"/>
</dbReference>
<dbReference type="InterPro" id="IPR014751">
    <property type="entry name" value="XRCC4-like_C"/>
</dbReference>
<dbReference type="PANTHER" id="PTHR19269">
    <property type="entry name" value="TROPOMYOSIN"/>
    <property type="match status" value="1"/>
</dbReference>
<dbReference type="Pfam" id="PF00261">
    <property type="entry name" value="Tropomyosin"/>
    <property type="match status" value="1"/>
</dbReference>
<dbReference type="PRINTS" id="PR00194">
    <property type="entry name" value="TROPOMYOSIN"/>
</dbReference>
<dbReference type="SUPFAM" id="SSF57997">
    <property type="entry name" value="Tropomyosin"/>
    <property type="match status" value="1"/>
</dbReference>
<dbReference type="PROSITE" id="PS00326">
    <property type="entry name" value="TROPOMYOSIN"/>
    <property type="match status" value="1"/>
</dbReference>
<accession>P67937</accession>
<accession>P07226</accession>
<accession>Q15659</accession>
<accession>Q9BU85</accession>
<accession>Q9H8Q3</accession>
<gene>
    <name type="primary">TPM4</name>
</gene>
<name>TPM4_PIG</name>
<feature type="initiator methionine" description="Removed" evidence="3">
    <location>
        <position position="1"/>
    </location>
</feature>
<feature type="chain" id="PRO_0000205637" description="Tropomyosin alpha-4 chain">
    <location>
        <begin position="2"/>
        <end position="248"/>
    </location>
</feature>
<feature type="region of interest" description="Disordered" evidence="4">
    <location>
        <begin position="15"/>
        <end position="47"/>
    </location>
</feature>
<feature type="coiled-coil region" evidence="1">
    <location>
        <begin position="2"/>
        <end position="248"/>
    </location>
</feature>
<feature type="compositionally biased region" description="Basic and acidic residues" evidence="4">
    <location>
        <begin position="33"/>
        <end position="47"/>
    </location>
</feature>
<feature type="modified residue" description="N-acetylalanine" evidence="3">
    <location>
        <position position="2"/>
    </location>
</feature>
<feature type="modified residue" description="Phosphoserine" evidence="2">
    <location>
        <position position="6"/>
    </location>
</feature>
<feature type="modified residue" description="N6-acetyllysine" evidence="3">
    <location>
        <position position="177"/>
    </location>
</feature>
<feature type="modified residue" description="N6-acetyllysine" evidence="3">
    <location>
        <position position="215"/>
    </location>
</feature>
<feature type="modified residue" description="Phosphothreonine" evidence="3">
    <location>
        <position position="216"/>
    </location>
</feature>
<sequence length="248" mass="28522">MAGLNSLEAVKRKIQALQQQADEAEDRAQGLQRELDGERERREKAEGDVAALNRRIQLVEEELDRAQERLATALQKLEEAEKAADESERGMKVIENRAMKDEEKMEIQEMQLKEAKHIAEEADRKYEEVARKLVILEGELERAEERAEVSELKCGDLEEELKNVTNNLKSLEAASEKYSEKEDKYEEEIKLLSDKLKEAETRAEFAERTVAKLEKTIDDLEEKLAQAKEENVGLHQTLDQTLNELNCI</sequence>